<reference evidence="12 13" key="1">
    <citation type="journal article" date="2005" name="Science">
        <title>The transcriptional landscape of the mammalian genome.</title>
        <authorList>
            <person name="Carninci P."/>
            <person name="Kasukawa T."/>
            <person name="Katayama S."/>
            <person name="Gough J."/>
            <person name="Frith M.C."/>
            <person name="Maeda N."/>
            <person name="Oyama R."/>
            <person name="Ravasi T."/>
            <person name="Lenhard B."/>
            <person name="Wells C."/>
            <person name="Kodzius R."/>
            <person name="Shimokawa K."/>
            <person name="Bajic V.B."/>
            <person name="Brenner S.E."/>
            <person name="Batalov S."/>
            <person name="Forrest A.R."/>
            <person name="Zavolan M."/>
            <person name="Davis M.J."/>
            <person name="Wilming L.G."/>
            <person name="Aidinis V."/>
            <person name="Allen J.E."/>
            <person name="Ambesi-Impiombato A."/>
            <person name="Apweiler R."/>
            <person name="Aturaliya R.N."/>
            <person name="Bailey T.L."/>
            <person name="Bansal M."/>
            <person name="Baxter L."/>
            <person name="Beisel K.W."/>
            <person name="Bersano T."/>
            <person name="Bono H."/>
            <person name="Chalk A.M."/>
            <person name="Chiu K.P."/>
            <person name="Choudhary V."/>
            <person name="Christoffels A."/>
            <person name="Clutterbuck D.R."/>
            <person name="Crowe M.L."/>
            <person name="Dalla E."/>
            <person name="Dalrymple B.P."/>
            <person name="de Bono B."/>
            <person name="Della Gatta G."/>
            <person name="di Bernardo D."/>
            <person name="Down T."/>
            <person name="Engstrom P."/>
            <person name="Fagiolini M."/>
            <person name="Faulkner G."/>
            <person name="Fletcher C.F."/>
            <person name="Fukushima T."/>
            <person name="Furuno M."/>
            <person name="Futaki S."/>
            <person name="Gariboldi M."/>
            <person name="Georgii-Hemming P."/>
            <person name="Gingeras T.R."/>
            <person name="Gojobori T."/>
            <person name="Green R.E."/>
            <person name="Gustincich S."/>
            <person name="Harbers M."/>
            <person name="Hayashi Y."/>
            <person name="Hensch T.K."/>
            <person name="Hirokawa N."/>
            <person name="Hill D."/>
            <person name="Huminiecki L."/>
            <person name="Iacono M."/>
            <person name="Ikeo K."/>
            <person name="Iwama A."/>
            <person name="Ishikawa T."/>
            <person name="Jakt M."/>
            <person name="Kanapin A."/>
            <person name="Katoh M."/>
            <person name="Kawasawa Y."/>
            <person name="Kelso J."/>
            <person name="Kitamura H."/>
            <person name="Kitano H."/>
            <person name="Kollias G."/>
            <person name="Krishnan S.P."/>
            <person name="Kruger A."/>
            <person name="Kummerfeld S.K."/>
            <person name="Kurochkin I.V."/>
            <person name="Lareau L.F."/>
            <person name="Lazarevic D."/>
            <person name="Lipovich L."/>
            <person name="Liu J."/>
            <person name="Liuni S."/>
            <person name="McWilliam S."/>
            <person name="Madan Babu M."/>
            <person name="Madera M."/>
            <person name="Marchionni L."/>
            <person name="Matsuda H."/>
            <person name="Matsuzawa S."/>
            <person name="Miki H."/>
            <person name="Mignone F."/>
            <person name="Miyake S."/>
            <person name="Morris K."/>
            <person name="Mottagui-Tabar S."/>
            <person name="Mulder N."/>
            <person name="Nakano N."/>
            <person name="Nakauchi H."/>
            <person name="Ng P."/>
            <person name="Nilsson R."/>
            <person name="Nishiguchi S."/>
            <person name="Nishikawa S."/>
            <person name="Nori F."/>
            <person name="Ohara O."/>
            <person name="Okazaki Y."/>
            <person name="Orlando V."/>
            <person name="Pang K.C."/>
            <person name="Pavan W.J."/>
            <person name="Pavesi G."/>
            <person name="Pesole G."/>
            <person name="Petrovsky N."/>
            <person name="Piazza S."/>
            <person name="Reed J."/>
            <person name="Reid J.F."/>
            <person name="Ring B.Z."/>
            <person name="Ringwald M."/>
            <person name="Rost B."/>
            <person name="Ruan Y."/>
            <person name="Salzberg S.L."/>
            <person name="Sandelin A."/>
            <person name="Schneider C."/>
            <person name="Schoenbach C."/>
            <person name="Sekiguchi K."/>
            <person name="Semple C.A."/>
            <person name="Seno S."/>
            <person name="Sessa L."/>
            <person name="Sheng Y."/>
            <person name="Shibata Y."/>
            <person name="Shimada H."/>
            <person name="Shimada K."/>
            <person name="Silva D."/>
            <person name="Sinclair B."/>
            <person name="Sperling S."/>
            <person name="Stupka E."/>
            <person name="Sugiura K."/>
            <person name="Sultana R."/>
            <person name="Takenaka Y."/>
            <person name="Taki K."/>
            <person name="Tammoja K."/>
            <person name="Tan S.L."/>
            <person name="Tang S."/>
            <person name="Taylor M.S."/>
            <person name="Tegner J."/>
            <person name="Teichmann S.A."/>
            <person name="Ueda H.R."/>
            <person name="van Nimwegen E."/>
            <person name="Verardo R."/>
            <person name="Wei C.L."/>
            <person name="Yagi K."/>
            <person name="Yamanishi H."/>
            <person name="Zabarovsky E."/>
            <person name="Zhu S."/>
            <person name="Zimmer A."/>
            <person name="Hide W."/>
            <person name="Bult C."/>
            <person name="Grimmond S.M."/>
            <person name="Teasdale R.D."/>
            <person name="Liu E.T."/>
            <person name="Brusic V."/>
            <person name="Quackenbush J."/>
            <person name="Wahlestedt C."/>
            <person name="Mattick J.S."/>
            <person name="Hume D.A."/>
            <person name="Kai C."/>
            <person name="Sasaki D."/>
            <person name="Tomaru Y."/>
            <person name="Fukuda S."/>
            <person name="Kanamori-Katayama M."/>
            <person name="Suzuki M."/>
            <person name="Aoki J."/>
            <person name="Arakawa T."/>
            <person name="Iida J."/>
            <person name="Imamura K."/>
            <person name="Itoh M."/>
            <person name="Kato T."/>
            <person name="Kawaji H."/>
            <person name="Kawagashira N."/>
            <person name="Kawashima T."/>
            <person name="Kojima M."/>
            <person name="Kondo S."/>
            <person name="Konno H."/>
            <person name="Nakano K."/>
            <person name="Ninomiya N."/>
            <person name="Nishio T."/>
            <person name="Okada M."/>
            <person name="Plessy C."/>
            <person name="Shibata K."/>
            <person name="Shiraki T."/>
            <person name="Suzuki S."/>
            <person name="Tagami M."/>
            <person name="Waki K."/>
            <person name="Watahiki A."/>
            <person name="Okamura-Oho Y."/>
            <person name="Suzuki H."/>
            <person name="Kawai J."/>
            <person name="Hayashizaki Y."/>
        </authorList>
    </citation>
    <scope>NUCLEOTIDE SEQUENCE [LARGE SCALE MRNA] (ISOFORM 1)</scope>
    <scope>NUCLEOTIDE SEQUENCE [LARGE SCALE MRNA] OF 1-779 (ISOFORM 2)</scope>
    <source>
        <strain evidence="13">C57BL/6J</strain>
        <tissue evidence="13">Testis</tissue>
        <tissue evidence="14">Urinary bladder</tissue>
    </source>
</reference>
<reference key="2">
    <citation type="journal article" date="2004" name="Genome Res.">
        <title>The status, quality, and expansion of the NIH full-length cDNA project: the Mammalian Gene Collection (MGC).</title>
        <authorList>
            <consortium name="The MGC Project Team"/>
        </authorList>
    </citation>
    <scope>NUCLEOTIDE SEQUENCE [LARGE SCALE MRNA]</scope>
    <source>
        <tissue>Testis</tissue>
    </source>
</reference>
<reference evidence="12 15" key="3">
    <citation type="journal article" date="2004" name="DNA Res.">
        <title>Prediction of the coding sequences of mouse homologues of KIAA gene: IV. The complete nucleotide sequences of 500 mouse KIAA-homologous cDNAs identified by screening of terminal sequences of cDNA clones randomly sampled from size-fractionated libraries.</title>
        <authorList>
            <person name="Okazaki N."/>
            <person name="Kikuno R."/>
            <person name="Ohara R."/>
            <person name="Inamoto S."/>
            <person name="Koseki H."/>
            <person name="Hiraoka S."/>
            <person name="Saga Y."/>
            <person name="Seino S."/>
            <person name="Nishimura M."/>
            <person name="Kaisho T."/>
            <person name="Hoshino K."/>
            <person name="Kitamura H."/>
            <person name="Nagase T."/>
            <person name="Ohara O."/>
            <person name="Koga H."/>
        </authorList>
    </citation>
    <scope>NUCLEOTIDE SEQUENCE [LARGE SCALE MRNA] OF 51-979 (ISOFORM 2)</scope>
    <source>
        <tissue evidence="15">Pancreatic islet</tissue>
    </source>
</reference>
<reference key="4">
    <citation type="journal article" date="2010" name="Cell">
        <title>A tissue-specific atlas of mouse protein phosphorylation and expression.</title>
        <authorList>
            <person name="Huttlin E.L."/>
            <person name="Jedrychowski M.P."/>
            <person name="Elias J.E."/>
            <person name="Goswami T."/>
            <person name="Rad R."/>
            <person name="Beausoleil S.A."/>
            <person name="Villen J."/>
            <person name="Haas W."/>
            <person name="Sowa M.E."/>
            <person name="Gygi S.P."/>
        </authorList>
    </citation>
    <scope>PHOSPHORYLATION [LARGE SCALE ANALYSIS] AT SER-650 AND SER-652</scope>
    <scope>IDENTIFICATION BY MASS SPECTROMETRY [LARGE SCALE ANALYSIS]</scope>
    <source>
        <tissue>Spleen</tissue>
        <tissue>Testis</tissue>
    </source>
</reference>
<dbReference type="EC" id="3.4.19.12" evidence="2"/>
<dbReference type="EMBL" id="AK030013">
    <property type="protein sequence ID" value="BAC26734.1"/>
    <property type="molecule type" value="mRNA"/>
</dbReference>
<dbReference type="EMBL" id="AK035640">
    <property type="protein sequence ID" value="BAC29135.1"/>
    <property type="molecule type" value="mRNA"/>
</dbReference>
<dbReference type="EMBL" id="AK173210">
    <property type="protein sequence ID" value="BAD32488.1"/>
    <property type="molecule type" value="mRNA"/>
</dbReference>
<dbReference type="EMBL" id="BC139091">
    <property type="protein sequence ID" value="AAI39092.1"/>
    <property type="molecule type" value="mRNA"/>
</dbReference>
<dbReference type="CCDS" id="CCDS15050.1">
    <molecule id="Q8C0R0-1"/>
</dbReference>
<dbReference type="CCDS" id="CCDS78616.1">
    <molecule id="Q8C0R0-2"/>
</dbReference>
<dbReference type="RefSeq" id="NP_001297591.1">
    <molecule id="Q8C0R0-2"/>
    <property type="nucleotide sequence ID" value="NM_001310662.1"/>
</dbReference>
<dbReference type="RefSeq" id="NP_795946.2">
    <property type="nucleotide sequence ID" value="NM_176972.4"/>
</dbReference>
<dbReference type="RefSeq" id="XP_006496117.1">
    <property type="nucleotide sequence ID" value="XM_006496054.3"/>
</dbReference>
<dbReference type="SMR" id="Q8C0R0"/>
<dbReference type="BioGRID" id="235424">
    <property type="interactions" value="2"/>
</dbReference>
<dbReference type="FunCoup" id="Q8C0R0">
    <property type="interactions" value="4222"/>
</dbReference>
<dbReference type="STRING" id="10090.ENSMUSP00000140670"/>
<dbReference type="GlyGen" id="Q8C0R0">
    <property type="glycosylation" value="1 site"/>
</dbReference>
<dbReference type="iPTMnet" id="Q8C0R0"/>
<dbReference type="PhosphoSitePlus" id="Q8C0R0"/>
<dbReference type="jPOST" id="Q8C0R0"/>
<dbReference type="PaxDb" id="10090-ENSMUSP00000140670"/>
<dbReference type="PeptideAtlas" id="Q8C0R0"/>
<dbReference type="ProteomicsDB" id="298361">
    <molecule id="Q8C0R0-1"/>
</dbReference>
<dbReference type="ProteomicsDB" id="298362">
    <molecule id="Q8C0R0-2"/>
</dbReference>
<dbReference type="Pumba" id="Q8C0R0"/>
<dbReference type="Antibodypedia" id="34273">
    <property type="antibodies" value="163 antibodies from 26 providers"/>
</dbReference>
<dbReference type="DNASU" id="319651"/>
<dbReference type="Ensembl" id="ENSMUST00000044260.11">
    <molecule id="Q8C0R0-2"/>
    <property type="protein sequence ID" value="ENSMUSP00000035445.6"/>
    <property type="gene ID" value="ENSMUSG00000033364.14"/>
</dbReference>
<dbReference type="GeneID" id="319651"/>
<dbReference type="KEGG" id="mmu:319651"/>
<dbReference type="UCSC" id="uc007bmc.2">
    <molecule id="Q8C0R0-2"/>
    <property type="organism name" value="mouse"/>
</dbReference>
<dbReference type="UCSC" id="uc007bmd.2">
    <molecule id="Q8C0R0-1"/>
    <property type="organism name" value="mouse"/>
</dbReference>
<dbReference type="AGR" id="MGI:2442483"/>
<dbReference type="CTD" id="57695"/>
<dbReference type="MGI" id="MGI:2442483">
    <property type="gene designation" value="Usp37"/>
</dbReference>
<dbReference type="VEuPathDB" id="HostDB:ENSMUSG00000033364"/>
<dbReference type="eggNOG" id="KOG1868">
    <property type="taxonomic scope" value="Eukaryota"/>
</dbReference>
<dbReference type="GeneTree" id="ENSGT00940000158091"/>
<dbReference type="HOGENOM" id="CLU_012557_0_0_1"/>
<dbReference type="InParanoid" id="Q8C0R0"/>
<dbReference type="OrthoDB" id="289038at2759"/>
<dbReference type="PhylomeDB" id="Q8C0R0"/>
<dbReference type="TreeFam" id="TF323032"/>
<dbReference type="Reactome" id="R-MMU-5689880">
    <property type="pathway name" value="Ub-specific processing proteases"/>
</dbReference>
<dbReference type="BioGRID-ORCS" id="319651">
    <property type="hits" value="15 hits in 77 CRISPR screens"/>
</dbReference>
<dbReference type="ChiTaRS" id="Usp37">
    <property type="organism name" value="mouse"/>
</dbReference>
<dbReference type="PRO" id="PR:Q8C0R0"/>
<dbReference type="Proteomes" id="UP000000589">
    <property type="component" value="Chromosome 1"/>
</dbReference>
<dbReference type="RNAct" id="Q8C0R0">
    <property type="molecule type" value="protein"/>
</dbReference>
<dbReference type="Bgee" id="ENSMUSG00000033364">
    <property type="expression patterns" value="Expressed in spermatocyte and 229 other cell types or tissues"/>
</dbReference>
<dbReference type="ExpressionAtlas" id="Q8C0R0">
    <property type="expression patterns" value="baseline and differential"/>
</dbReference>
<dbReference type="GO" id="GO:0005694">
    <property type="term" value="C:chromosome"/>
    <property type="evidence" value="ECO:0007669"/>
    <property type="project" value="UniProtKB-SubCell"/>
</dbReference>
<dbReference type="GO" id="GO:0005634">
    <property type="term" value="C:nucleus"/>
    <property type="evidence" value="ECO:0007669"/>
    <property type="project" value="UniProtKB-SubCell"/>
</dbReference>
<dbReference type="GO" id="GO:0004843">
    <property type="term" value="F:cysteine-type deubiquitinase activity"/>
    <property type="evidence" value="ECO:0000250"/>
    <property type="project" value="UniProtKB"/>
</dbReference>
<dbReference type="GO" id="GO:0004197">
    <property type="term" value="F:cysteine-type endopeptidase activity"/>
    <property type="evidence" value="ECO:0000250"/>
    <property type="project" value="UniProtKB"/>
</dbReference>
<dbReference type="GO" id="GO:0051301">
    <property type="term" value="P:cell division"/>
    <property type="evidence" value="ECO:0007669"/>
    <property type="project" value="UniProtKB-KW"/>
</dbReference>
<dbReference type="GO" id="GO:0000082">
    <property type="term" value="P:G1/S transition of mitotic cell cycle"/>
    <property type="evidence" value="ECO:0000250"/>
    <property type="project" value="UniProtKB"/>
</dbReference>
<dbReference type="GO" id="GO:0016579">
    <property type="term" value="P:protein deubiquitination"/>
    <property type="evidence" value="ECO:0000250"/>
    <property type="project" value="UniProtKB"/>
</dbReference>
<dbReference type="GO" id="GO:0035871">
    <property type="term" value="P:protein K11-linked deubiquitination"/>
    <property type="evidence" value="ECO:0000250"/>
    <property type="project" value="UniProtKB"/>
</dbReference>
<dbReference type="GO" id="GO:0071108">
    <property type="term" value="P:protein K48-linked deubiquitination"/>
    <property type="evidence" value="ECO:0000250"/>
    <property type="project" value="UniProtKB"/>
</dbReference>
<dbReference type="GO" id="GO:0006508">
    <property type="term" value="P:proteolysis"/>
    <property type="evidence" value="ECO:0007669"/>
    <property type="project" value="UniProtKB-KW"/>
</dbReference>
<dbReference type="GO" id="GO:0006275">
    <property type="term" value="P:regulation of DNA replication"/>
    <property type="evidence" value="ECO:0000250"/>
    <property type="project" value="UniProtKB"/>
</dbReference>
<dbReference type="CDD" id="cd02257">
    <property type="entry name" value="Peptidase_C19"/>
    <property type="match status" value="2"/>
</dbReference>
<dbReference type="CDD" id="cd13312">
    <property type="entry name" value="PH_USP37_like"/>
    <property type="match status" value="1"/>
</dbReference>
<dbReference type="FunFam" id="2.30.29.180:FF:000001">
    <property type="entry name" value="Ubiquitin carboxyl-terminal hydrolase 37"/>
    <property type="match status" value="1"/>
</dbReference>
<dbReference type="FunFam" id="3.90.70.10:FF:000040">
    <property type="entry name" value="Ubiquitin carboxyl-terminal hydrolase 37"/>
    <property type="match status" value="1"/>
</dbReference>
<dbReference type="FunFam" id="3.90.70.10:FF:000287">
    <property type="entry name" value="Ubiquitin specific peptidase 37"/>
    <property type="match status" value="1"/>
</dbReference>
<dbReference type="Gene3D" id="3.90.70.10">
    <property type="entry name" value="Cysteine proteinases"/>
    <property type="match status" value="2"/>
</dbReference>
<dbReference type="Gene3D" id="2.30.29.180">
    <property type="entry name" value="Ubiquitin carboxyl-terminal hydrolase 26/29/37, pleckstrin homology-like domain"/>
    <property type="match status" value="1"/>
</dbReference>
<dbReference type="InterPro" id="IPR038765">
    <property type="entry name" value="Papain-like_cys_pep_sf"/>
</dbReference>
<dbReference type="InterPro" id="IPR050164">
    <property type="entry name" value="Peptidase_C19"/>
</dbReference>
<dbReference type="InterPro" id="IPR001394">
    <property type="entry name" value="Peptidase_C19_UCH"/>
</dbReference>
<dbReference type="InterPro" id="IPR003903">
    <property type="entry name" value="UIM_dom"/>
</dbReference>
<dbReference type="InterPro" id="IPR032069">
    <property type="entry name" value="USP37-like_PH"/>
</dbReference>
<dbReference type="InterPro" id="IPR038093">
    <property type="entry name" value="USP37-like_PH_sf"/>
</dbReference>
<dbReference type="InterPro" id="IPR018200">
    <property type="entry name" value="USP_CS"/>
</dbReference>
<dbReference type="InterPro" id="IPR028889">
    <property type="entry name" value="USP_dom"/>
</dbReference>
<dbReference type="PANTHER" id="PTHR24006">
    <property type="entry name" value="UBIQUITIN CARBOXYL-TERMINAL HYDROLASE"/>
    <property type="match status" value="1"/>
</dbReference>
<dbReference type="PANTHER" id="PTHR24006:SF686">
    <property type="entry name" value="UBIQUITIN CARBOXYL-TERMINAL HYDROLASE 37"/>
    <property type="match status" value="1"/>
</dbReference>
<dbReference type="Pfam" id="PF00443">
    <property type="entry name" value="UCH"/>
    <property type="match status" value="1"/>
</dbReference>
<dbReference type="Pfam" id="PF16674">
    <property type="entry name" value="UCH_N"/>
    <property type="match status" value="1"/>
</dbReference>
<dbReference type="Pfam" id="PF02809">
    <property type="entry name" value="UIM"/>
    <property type="match status" value="3"/>
</dbReference>
<dbReference type="SMART" id="SM00726">
    <property type="entry name" value="UIM"/>
    <property type="match status" value="3"/>
</dbReference>
<dbReference type="SUPFAM" id="SSF54001">
    <property type="entry name" value="Cysteine proteinases"/>
    <property type="match status" value="1"/>
</dbReference>
<dbReference type="PROSITE" id="PS50330">
    <property type="entry name" value="UIM"/>
    <property type="match status" value="2"/>
</dbReference>
<dbReference type="PROSITE" id="PS00972">
    <property type="entry name" value="USP_1"/>
    <property type="match status" value="1"/>
</dbReference>
<dbReference type="PROSITE" id="PS00973">
    <property type="entry name" value="USP_2"/>
    <property type="match status" value="1"/>
</dbReference>
<dbReference type="PROSITE" id="PS50235">
    <property type="entry name" value="USP_3"/>
    <property type="match status" value="1"/>
</dbReference>
<accession>Q8C0R0</accession>
<accession>B2RT12</accession>
<accession>Q69ZF6</accession>
<accession>Q8BZE6</accession>
<evidence type="ECO:0000250" key="1"/>
<evidence type="ECO:0000250" key="2">
    <source>
        <dbReference type="UniProtKB" id="Q86T82"/>
    </source>
</evidence>
<evidence type="ECO:0000255" key="3"/>
<evidence type="ECO:0000255" key="4">
    <source>
        <dbReference type="PROSITE-ProRule" id="PRU00213"/>
    </source>
</evidence>
<evidence type="ECO:0000255" key="5">
    <source>
        <dbReference type="PROSITE-ProRule" id="PRU10092"/>
    </source>
</evidence>
<evidence type="ECO:0000255" key="6">
    <source>
        <dbReference type="PROSITE-ProRule" id="PRU10093"/>
    </source>
</evidence>
<evidence type="ECO:0000256" key="7">
    <source>
        <dbReference type="SAM" id="MobiDB-lite"/>
    </source>
</evidence>
<evidence type="ECO:0000269" key="8">
    <source>
    </source>
</evidence>
<evidence type="ECO:0000269" key="9">
    <source>
    </source>
</evidence>
<evidence type="ECO:0000303" key="10">
    <source>
    </source>
</evidence>
<evidence type="ECO:0000303" key="11">
    <source>
    </source>
</evidence>
<evidence type="ECO:0000305" key="12"/>
<evidence type="ECO:0000312" key="13">
    <source>
        <dbReference type="EMBL" id="BAC26734.1"/>
    </source>
</evidence>
<evidence type="ECO:0000312" key="14">
    <source>
        <dbReference type="EMBL" id="BAC29135.1"/>
    </source>
</evidence>
<evidence type="ECO:0000312" key="15">
    <source>
        <dbReference type="EMBL" id="BAD32488.1"/>
    </source>
</evidence>
<evidence type="ECO:0000312" key="16">
    <source>
        <dbReference type="MGI" id="MGI:2442483"/>
    </source>
</evidence>
<evidence type="ECO:0007744" key="17">
    <source>
    </source>
</evidence>
<name>UBP37_MOUSE</name>
<protein>
    <recommendedName>
        <fullName>Ubiquitin carboxyl-terminal hydrolase 37</fullName>
        <ecNumber evidence="2">3.4.19.12</ecNumber>
    </recommendedName>
    <alternativeName>
        <fullName>Deubiquitinating enzyme 37</fullName>
    </alternativeName>
    <alternativeName>
        <fullName>Ubiquitin thioesterase 37</fullName>
    </alternativeName>
    <alternativeName>
        <fullName>Ubiquitin-specific-processing protease 37</fullName>
    </alternativeName>
</protein>
<keyword id="KW-0025">Alternative splicing</keyword>
<keyword id="KW-0131">Cell cycle</keyword>
<keyword id="KW-0132">Cell division</keyword>
<keyword id="KW-0158">Chromosome</keyword>
<keyword id="KW-0378">Hydrolase</keyword>
<keyword id="KW-0498">Mitosis</keyword>
<keyword id="KW-0539">Nucleus</keyword>
<keyword id="KW-0597">Phosphoprotein</keyword>
<keyword id="KW-0645">Protease</keyword>
<keyword id="KW-1185">Reference proteome</keyword>
<keyword id="KW-0677">Repeat</keyword>
<keyword id="KW-0788">Thiol protease</keyword>
<keyword id="KW-0832">Ubl conjugation</keyword>
<keyword id="KW-0833">Ubl conjugation pathway</keyword>
<sequence>MSPLKIYGPIRIRSMQTGITKWKEGSFEIVEKDNRVSLLVHYNTGGIPRVFQLSHNIKNVVLRPSGIKQSRLMLTLQDNSFLSIDKVPSKDAEEMRLFLDAVHQNRLHAAMKASQGSGSFGTILGSRTSQKETNRQLSYSDNQASSKRGSLETKDEIPFRKVLGSPGRGPIKTVTGGGMAVTRTIPSLTLTSTPLRSGLLENRTEKRKRMLSGSELTEDYPKENDSSSNNKAMTDPSRKYLTSCREKQLSLKQAEENRTSGLLPLQSSSFYGSRAGSKDYSSGVTNLDRCNVSSQTPSAKRSLGFLPQPTPLSVKKLRCNQDYAGWNRPRVPLSSHQQQLQGFSNLGNTCYMNAILQSLFSLQSFANDLLKQSIPWKKIPFNALIRRFANLLIKKDICNSETKKELLKKVKNAISATAERFSGYVQNDAHEFLSQCLDQLKEDMEKLNKTWKTEPVLGEENLPDTSATKVFTCPVITNLEFEVQHSIICKACGETIPKREQFNDLSIDLPRRKKPLPPRSIQDSLDLFFRAEELEYSCEKCGGKCALVRHKFNRLPRVLILHLKRYSFNVALSLNNKLGQQVIIPRFLTLASHCTESTKPPVTLGWSAPVAISRPLRACQMMNSCITSPSAPSKKFTFKSKSSVTSCLDSDSEDELKRSVVLSQRLCDLPGNEQYQEDVEKDLKLCRLEPGKAELENSGFDRMSEEEVLAAVLEISRREASPVLSPEDDDKPTSSPDTGFAEDDIPEMPENPDAMEIEKSKTITEPGPASFTEITKDCDENKENKTPEGSQGEVDWLQQYDVDREREEQELQQALAQSLQEQEAWEQKEDDDLKRATELSLQEFNNSFLDSLGSDEDSGNEDVFDMEYTEAEAEELKRNAETGALPHSYRLISVVSHIGSTSSSGHYISDVYDIKKQAWFTYNDLEVSKIQEAAVQSDRDRSGYIFFYMHKEIFDELLETEKTSQALSMEVGRAARQAS</sequence>
<feature type="chain" id="PRO_0000259610" description="Ubiquitin carboxyl-terminal hydrolase 37">
    <location>
        <begin position="1"/>
        <end position="979"/>
    </location>
</feature>
<feature type="domain" description="USP">
    <location>
        <begin position="341"/>
        <end position="951"/>
    </location>
</feature>
<feature type="domain" description="UIM 1" evidence="4">
    <location>
        <begin position="704"/>
        <end position="723"/>
    </location>
</feature>
<feature type="domain" description="UIM 2" evidence="4">
    <location>
        <begin position="806"/>
        <end position="825"/>
    </location>
</feature>
<feature type="domain" description="UIM 3" evidence="4">
    <location>
        <begin position="828"/>
        <end position="847"/>
    </location>
</feature>
<feature type="region of interest" description="Disordered" evidence="7">
    <location>
        <begin position="116"/>
        <end position="178"/>
    </location>
</feature>
<feature type="region of interest" description="Disordered" evidence="7">
    <location>
        <begin position="192"/>
        <end position="240"/>
    </location>
</feature>
<feature type="region of interest" description="Disordered" evidence="7">
    <location>
        <begin position="719"/>
        <end position="795"/>
    </location>
</feature>
<feature type="short sequence motif" description="KEN box 1" evidence="1">
    <location>
        <begin position="32"/>
        <end position="34"/>
    </location>
</feature>
<feature type="short sequence motif" description="D-box 1" evidence="1">
    <location>
        <begin position="71"/>
        <end position="79"/>
    </location>
</feature>
<feature type="short sequence motif" description="D-box 2" evidence="1">
    <location>
        <begin position="96"/>
        <end position="105"/>
    </location>
</feature>
<feature type="short sequence motif" description="D-box 3" evidence="1">
    <location>
        <begin position="160"/>
        <end position="168"/>
    </location>
</feature>
<feature type="short sequence motif" description="KEN box 2" evidence="1">
    <location>
        <begin position="222"/>
        <end position="224"/>
    </location>
</feature>
<feature type="short sequence motif" description="KEN box 3" evidence="1">
    <location>
        <begin position="782"/>
        <end position="784"/>
    </location>
</feature>
<feature type="compositionally biased region" description="Polar residues" evidence="7">
    <location>
        <begin position="135"/>
        <end position="148"/>
    </location>
</feature>
<feature type="compositionally biased region" description="Basic and acidic residues" evidence="7">
    <location>
        <begin position="149"/>
        <end position="159"/>
    </location>
</feature>
<feature type="compositionally biased region" description="Basic and acidic residues" evidence="7">
    <location>
        <begin position="774"/>
        <end position="786"/>
    </location>
</feature>
<feature type="active site" description="Nucleophile" evidence="2 5 6">
    <location>
        <position position="350"/>
    </location>
</feature>
<feature type="active site" description="Proton acceptor" evidence="5 6">
    <location>
        <position position="906"/>
    </location>
</feature>
<feature type="modified residue" description="Phosphoserine" evidence="2">
    <location>
        <position position="114"/>
    </location>
</feature>
<feature type="modified residue" description="Phosphoserine" evidence="2">
    <location>
        <position position="212"/>
    </location>
</feature>
<feature type="modified residue" description="Phosphoserine; by CDK2" evidence="2">
    <location>
        <position position="628"/>
    </location>
</feature>
<feature type="modified residue" description="Phosphoserine" evidence="17">
    <location>
        <position position="650"/>
    </location>
</feature>
<feature type="modified residue" description="Phosphoserine" evidence="17">
    <location>
        <position position="652"/>
    </location>
</feature>
<feature type="modified residue" description="Phosphoserine" evidence="2">
    <location>
        <position position="770"/>
    </location>
</feature>
<feature type="splice variant" id="VSP_052196" description="In isoform 2." evidence="10 11">
    <original>ISRPLRACQMMNSCITSPSAPSK</original>
    <variation>M</variation>
    <location>
        <begin position="612"/>
        <end position="634"/>
    </location>
</feature>
<feature type="sequence conflict" description="In Ref. 2; AAI39092." evidence="12" ref="2">
    <original>M</original>
    <variation>V</variation>
    <location>
        <position position="622"/>
    </location>
</feature>
<comment type="function">
    <text evidence="2">Deubiquitinase that plays a role in different processes including cell cycle regulation, DNA replication or DNA damage response. Antagonizes the anaphase-promoting complex (APC/C) during G1/S transition by mediating deubiquitination of cyclin-A (CCNA1 and CCNA2), thereby promoting S phase entry. Specifically mediates deubiquitination of 'Lys-11'-linked polyubiquitin chains, a specific ubiquitin-linkage type mediated by the APC/C complex. Phosphorylation at Ser-628 during G1/S phase maximizes the deubiquitinase activity, leading to prevent degradation of cyclin-A (CCNA1 and CCNA2). Plays an important role in the regulation of DNA replication by stabilizing the licensing factor CDT1. Also plays an essential role beyond S-phase entry to promote the efficiency and fidelity of replication by deubiquitinating checkpoint kinase 1/CHK1, promoting its stability. Sustains the DNA damage response (DDR) by deubiquitinating and stabilizing the ATP-dependent DNA helicase BLM. Mechanistically, DNA double-strand breaks (DSB) promotes ATM-mediated phosphorylation of USP37 and enhances the binding between USP37 and BLM. Promotes cell migration by deubiquitinating and stabilizing the epithelial-mesenchymal transition (EMT)-inducing transcription factor SNAI. Plays a role in the regulation of mitotic spindle assembly and mitotic progression by associating with chromatin-associated WAPL and stabilizing it through deubiquitination.</text>
</comment>
<comment type="catalytic activity">
    <reaction evidence="2">
        <text>Thiol-dependent hydrolysis of ester, thioester, amide, peptide and isopeptide bonds formed by the C-terminal Gly of ubiquitin (a 76-residue protein attached to proteins as an intracellular targeting signal).</text>
        <dbReference type="EC" id="3.4.19.12"/>
    </reaction>
</comment>
<comment type="subunit">
    <text evidence="2">Interacts with FZR1/CDH1. Interacts with CDT1.</text>
</comment>
<comment type="subcellular location">
    <subcellularLocation>
        <location evidence="2">Nucleus</location>
    </subcellularLocation>
    <subcellularLocation>
        <location evidence="2">Chromosome</location>
    </subcellularLocation>
</comment>
<comment type="alternative products">
    <event type="alternative splicing"/>
    <isoform>
        <id>Q8C0R0-1</id>
        <name evidence="9">1</name>
        <sequence type="displayed"/>
    </isoform>
    <isoform>
        <id>Q8C0R0-2</id>
        <name evidence="8 9">2</name>
        <sequence type="described" ref="VSP_052196"/>
    </isoform>
</comment>
<comment type="domain">
    <text evidence="2">The KEN box 3 is required for interaction with FZR1/CDH1 and is essential for APC(CDH1)-mediated ubiquitination.</text>
</comment>
<comment type="PTM">
    <text evidence="2">Polyubiquitinated via 'Lys-11'-linked ubiquitin by the APC(CDH1) complex during late mitosis, leading to its degradation. Able to mediate auto-deubiquitination.</text>
</comment>
<comment type="PTM">
    <text evidence="2">Phosphorylated at Ser-628 by CDK2 during G1/S phase but not during mitosis; phosphorylation at Ser-628 is required for deubiquitinase activity. Also polyubiquitinated during early G1 phase, without leading to degradation. Phosphorylated at Ser-114 by ATM following DNA damage, which in turn increases its deubiquitination activity towards BLM.</text>
</comment>
<comment type="similarity">
    <text evidence="3">Belongs to the peptidase C19 family.</text>
</comment>
<proteinExistence type="evidence at protein level"/>
<organism>
    <name type="scientific">Mus musculus</name>
    <name type="common">Mouse</name>
    <dbReference type="NCBI Taxonomy" id="10090"/>
    <lineage>
        <taxon>Eukaryota</taxon>
        <taxon>Metazoa</taxon>
        <taxon>Chordata</taxon>
        <taxon>Craniata</taxon>
        <taxon>Vertebrata</taxon>
        <taxon>Euteleostomi</taxon>
        <taxon>Mammalia</taxon>
        <taxon>Eutheria</taxon>
        <taxon>Euarchontoglires</taxon>
        <taxon>Glires</taxon>
        <taxon>Rodentia</taxon>
        <taxon>Myomorpha</taxon>
        <taxon>Muroidea</taxon>
        <taxon>Muridae</taxon>
        <taxon>Murinae</taxon>
        <taxon>Mus</taxon>
        <taxon>Mus</taxon>
    </lineage>
</organism>
<gene>
    <name evidence="16" type="primary">Usp37</name>
    <name evidence="15" type="synonym">Kiaa1594</name>
</gene>